<keyword id="KW-0175">Coiled coil</keyword>
<keyword id="KW-0233">DNA recombination</keyword>
<keyword id="KW-0238">DNA-binding</keyword>
<keyword id="KW-0469">Meiosis</keyword>
<keyword id="KW-0539">Nucleus</keyword>
<keyword id="KW-1185">Reference proteome</keyword>
<protein>
    <recommendedName>
        <fullName>Homologous-pairing protein 2 homolog</fullName>
    </recommendedName>
</protein>
<organism>
    <name type="scientific">Dictyostelium discoideum</name>
    <name type="common">Social amoeba</name>
    <dbReference type="NCBI Taxonomy" id="44689"/>
    <lineage>
        <taxon>Eukaryota</taxon>
        <taxon>Amoebozoa</taxon>
        <taxon>Evosea</taxon>
        <taxon>Eumycetozoa</taxon>
        <taxon>Dictyostelia</taxon>
        <taxon>Dictyosteliales</taxon>
        <taxon>Dictyosteliaceae</taxon>
        <taxon>Dictyostelium</taxon>
    </lineage>
</organism>
<proteinExistence type="inferred from homology"/>
<accession>Q54UM1</accession>
<evidence type="ECO:0000250" key="1"/>
<evidence type="ECO:0000255" key="2"/>
<evidence type="ECO:0000256" key="3">
    <source>
        <dbReference type="SAM" id="MobiDB-lite"/>
    </source>
</evidence>
<evidence type="ECO:0000305" key="4"/>
<comment type="function">
    <text evidence="1">Required for proper homologous pairing and efficient cross-over and intragenic recombination during meiosis.</text>
</comment>
<comment type="subcellular location">
    <subcellularLocation>
        <location evidence="1">Nucleus</location>
    </subcellularLocation>
</comment>
<comment type="similarity">
    <text evidence="4">Belongs to the HOP2 family.</text>
</comment>
<name>HOP2_DICDI</name>
<reference key="1">
    <citation type="journal article" date="2005" name="Nature">
        <title>The genome of the social amoeba Dictyostelium discoideum.</title>
        <authorList>
            <person name="Eichinger L."/>
            <person name="Pachebat J.A."/>
            <person name="Gloeckner G."/>
            <person name="Rajandream M.A."/>
            <person name="Sucgang R."/>
            <person name="Berriman M."/>
            <person name="Song J."/>
            <person name="Olsen R."/>
            <person name="Szafranski K."/>
            <person name="Xu Q."/>
            <person name="Tunggal B."/>
            <person name="Kummerfeld S."/>
            <person name="Madera M."/>
            <person name="Konfortov B.A."/>
            <person name="Rivero F."/>
            <person name="Bankier A.T."/>
            <person name="Lehmann R."/>
            <person name="Hamlin N."/>
            <person name="Davies R."/>
            <person name="Gaudet P."/>
            <person name="Fey P."/>
            <person name="Pilcher K."/>
            <person name="Chen G."/>
            <person name="Saunders D."/>
            <person name="Sodergren E.J."/>
            <person name="Davis P."/>
            <person name="Kerhornou A."/>
            <person name="Nie X."/>
            <person name="Hall N."/>
            <person name="Anjard C."/>
            <person name="Hemphill L."/>
            <person name="Bason N."/>
            <person name="Farbrother P."/>
            <person name="Desany B."/>
            <person name="Just E."/>
            <person name="Morio T."/>
            <person name="Rost R."/>
            <person name="Churcher C.M."/>
            <person name="Cooper J."/>
            <person name="Haydock S."/>
            <person name="van Driessche N."/>
            <person name="Cronin A."/>
            <person name="Goodhead I."/>
            <person name="Muzny D.M."/>
            <person name="Mourier T."/>
            <person name="Pain A."/>
            <person name="Lu M."/>
            <person name="Harper D."/>
            <person name="Lindsay R."/>
            <person name="Hauser H."/>
            <person name="James K.D."/>
            <person name="Quiles M."/>
            <person name="Madan Babu M."/>
            <person name="Saito T."/>
            <person name="Buchrieser C."/>
            <person name="Wardroper A."/>
            <person name="Felder M."/>
            <person name="Thangavelu M."/>
            <person name="Johnson D."/>
            <person name="Knights A."/>
            <person name="Loulseged H."/>
            <person name="Mungall K.L."/>
            <person name="Oliver K."/>
            <person name="Price C."/>
            <person name="Quail M.A."/>
            <person name="Urushihara H."/>
            <person name="Hernandez J."/>
            <person name="Rabbinowitsch E."/>
            <person name="Steffen D."/>
            <person name="Sanders M."/>
            <person name="Ma J."/>
            <person name="Kohara Y."/>
            <person name="Sharp S."/>
            <person name="Simmonds M.N."/>
            <person name="Spiegler S."/>
            <person name="Tivey A."/>
            <person name="Sugano S."/>
            <person name="White B."/>
            <person name="Walker D."/>
            <person name="Woodward J.R."/>
            <person name="Winckler T."/>
            <person name="Tanaka Y."/>
            <person name="Shaulsky G."/>
            <person name="Schleicher M."/>
            <person name="Weinstock G.M."/>
            <person name="Rosenthal A."/>
            <person name="Cox E.C."/>
            <person name="Chisholm R.L."/>
            <person name="Gibbs R.A."/>
            <person name="Loomis W.F."/>
            <person name="Platzer M."/>
            <person name="Kay R.R."/>
            <person name="Williams J.G."/>
            <person name="Dear P.H."/>
            <person name="Noegel A.A."/>
            <person name="Barrell B.G."/>
            <person name="Kuspa A."/>
        </authorList>
    </citation>
    <scope>NUCLEOTIDE SEQUENCE [LARGE SCALE GENOMIC DNA]</scope>
    <source>
        <strain>AX4</strain>
    </source>
</reference>
<feature type="chain" id="PRO_0000330899" description="Homologous-pairing protein 2 homolog">
    <location>
        <begin position="1"/>
        <end position="243"/>
    </location>
</feature>
<feature type="region of interest" description="Disordered" evidence="3">
    <location>
        <begin position="217"/>
        <end position="243"/>
    </location>
</feature>
<feature type="coiled-coil region" evidence="2">
    <location>
        <begin position="86"/>
        <end position="153"/>
    </location>
</feature>
<feature type="compositionally biased region" description="Polar residues" evidence="3">
    <location>
        <begin position="223"/>
        <end position="235"/>
    </location>
</feature>
<gene>
    <name type="primary">hop2</name>
    <name type="ORF">DDB_G0280989</name>
</gene>
<dbReference type="EMBL" id="AAFI02000040">
    <property type="protein sequence ID" value="EAL66791.1"/>
    <property type="molecule type" value="Genomic_DNA"/>
</dbReference>
<dbReference type="RefSeq" id="XP_640755.1">
    <property type="nucleotide sequence ID" value="XM_635663.1"/>
</dbReference>
<dbReference type="SMR" id="Q54UM1"/>
<dbReference type="FunCoup" id="Q54UM1">
    <property type="interactions" value="93"/>
</dbReference>
<dbReference type="STRING" id="44689.Q54UM1"/>
<dbReference type="PaxDb" id="44689-DDB0302478"/>
<dbReference type="EnsemblProtists" id="EAL66791">
    <property type="protein sequence ID" value="EAL66791"/>
    <property type="gene ID" value="DDB_G0280989"/>
</dbReference>
<dbReference type="GeneID" id="8622808"/>
<dbReference type="KEGG" id="ddi:DDB_G0280989"/>
<dbReference type="dictyBase" id="DDB_G0280989">
    <property type="gene designation" value="hop2"/>
</dbReference>
<dbReference type="VEuPathDB" id="AmoebaDB:DDB_G0280989"/>
<dbReference type="eggNOG" id="KOG4603">
    <property type="taxonomic scope" value="Eukaryota"/>
</dbReference>
<dbReference type="HOGENOM" id="CLU_063266_2_1_1"/>
<dbReference type="InParanoid" id="Q54UM1"/>
<dbReference type="OMA" id="CIYTEIG"/>
<dbReference type="PhylomeDB" id="Q54UM1"/>
<dbReference type="PRO" id="PR:Q54UM1"/>
<dbReference type="Proteomes" id="UP000002195">
    <property type="component" value="Chromosome 3"/>
</dbReference>
<dbReference type="GO" id="GO:0000794">
    <property type="term" value="C:condensed nuclear chromosome"/>
    <property type="evidence" value="ECO:0000318"/>
    <property type="project" value="GO_Central"/>
</dbReference>
<dbReference type="GO" id="GO:0120231">
    <property type="term" value="C:DNA recombinase auxiliary factor complex"/>
    <property type="evidence" value="ECO:0000318"/>
    <property type="project" value="GO_Central"/>
</dbReference>
<dbReference type="GO" id="GO:0003690">
    <property type="term" value="F:double-stranded DNA binding"/>
    <property type="evidence" value="ECO:0000318"/>
    <property type="project" value="GO_Central"/>
</dbReference>
<dbReference type="GO" id="GO:0120230">
    <property type="term" value="F:recombinase activator activity"/>
    <property type="evidence" value="ECO:0000318"/>
    <property type="project" value="GO_Central"/>
</dbReference>
<dbReference type="GO" id="GO:0007129">
    <property type="term" value="P:homologous chromosome pairing at meiosis"/>
    <property type="evidence" value="ECO:0000318"/>
    <property type="project" value="GO_Central"/>
</dbReference>
<dbReference type="GO" id="GO:0000709">
    <property type="term" value="P:meiotic joint molecule formation"/>
    <property type="evidence" value="ECO:0000318"/>
    <property type="project" value="GO_Central"/>
</dbReference>
<dbReference type="GO" id="GO:0010774">
    <property type="term" value="P:meiotic strand invasion involved in reciprocal meiotic recombination"/>
    <property type="evidence" value="ECO:0000318"/>
    <property type="project" value="GO_Central"/>
</dbReference>
<dbReference type="Gene3D" id="1.10.10.10">
    <property type="entry name" value="Winged helix-like DNA-binding domain superfamily/Winged helix DNA-binding domain"/>
    <property type="match status" value="1"/>
</dbReference>
<dbReference type="InterPro" id="IPR010776">
    <property type="entry name" value="Hop2_WH_dom"/>
</dbReference>
<dbReference type="InterPro" id="IPR040661">
    <property type="entry name" value="LZ3wCH"/>
</dbReference>
<dbReference type="InterPro" id="IPR036388">
    <property type="entry name" value="WH-like_DNA-bd_sf"/>
</dbReference>
<dbReference type="PANTHER" id="PTHR15938:SF0">
    <property type="entry name" value="HOMOLOGOUS-PAIRING PROTEIN 2 HOMOLOG"/>
    <property type="match status" value="1"/>
</dbReference>
<dbReference type="PANTHER" id="PTHR15938">
    <property type="entry name" value="TBP-1 INTERACTING PROTEIN"/>
    <property type="match status" value="1"/>
</dbReference>
<dbReference type="Pfam" id="PF18517">
    <property type="entry name" value="LZ3wCH"/>
    <property type="match status" value="1"/>
</dbReference>
<dbReference type="Pfam" id="PF07106">
    <property type="entry name" value="TBPIP"/>
    <property type="match status" value="1"/>
</dbReference>
<sequence length="243" mass="28510">MSKKITKKDEVEENILNLINKANRPYNYQMIEAAFPSMGKTQIVKTLKSLGEQGKLTFKEYNKAIIYWRIQDTGPKLDEQGYEIPQESIHDLNRKLDGINRQLEVEQDTLKSLISQSKQLNNQLSDEQIQKEVNQLSTENKELESKLLTFQTKEIMSDKDKQRLDDTIKKARSEWVKRKALFRDILDQVLERSNKKKKDLQEDIGWETDEDLKIQMIPDYSKPLSQQTLSSTNDESPFKKQKK</sequence>